<keyword id="KW-0687">Ribonucleoprotein</keyword>
<keyword id="KW-0689">Ribosomal protein</keyword>
<dbReference type="EMBL" id="CP001404">
    <property type="protein sequence ID" value="ACP48493.1"/>
    <property type="molecule type" value="Genomic_DNA"/>
</dbReference>
<dbReference type="RefSeq" id="WP_012713741.1">
    <property type="nucleotide sequence ID" value="NC_012623.1"/>
</dbReference>
<dbReference type="SMR" id="C3NH83"/>
<dbReference type="KEGG" id="sin:YN1551_1402"/>
<dbReference type="HOGENOM" id="CLU_118652_2_0_2"/>
<dbReference type="Proteomes" id="UP000006818">
    <property type="component" value="Chromosome"/>
</dbReference>
<dbReference type="GO" id="GO:1990904">
    <property type="term" value="C:ribonucleoprotein complex"/>
    <property type="evidence" value="ECO:0007669"/>
    <property type="project" value="UniProtKB-KW"/>
</dbReference>
<dbReference type="GO" id="GO:0005840">
    <property type="term" value="C:ribosome"/>
    <property type="evidence" value="ECO:0007669"/>
    <property type="project" value="UniProtKB-KW"/>
</dbReference>
<dbReference type="GO" id="GO:0003735">
    <property type="term" value="F:structural constituent of ribosome"/>
    <property type="evidence" value="ECO:0007669"/>
    <property type="project" value="InterPro"/>
</dbReference>
<dbReference type="GO" id="GO:0006412">
    <property type="term" value="P:translation"/>
    <property type="evidence" value="ECO:0007669"/>
    <property type="project" value="UniProtKB-UniRule"/>
</dbReference>
<dbReference type="Gene3D" id="6.20.340.10">
    <property type="match status" value="1"/>
</dbReference>
<dbReference type="HAMAP" id="MF_00349">
    <property type="entry name" value="Ribosomal_eL34"/>
    <property type="match status" value="1"/>
</dbReference>
<dbReference type="InterPro" id="IPR008195">
    <property type="entry name" value="Ribosomal_eL34"/>
</dbReference>
<dbReference type="InterPro" id="IPR038562">
    <property type="entry name" value="Ribosomal_eL34_C_sf"/>
</dbReference>
<dbReference type="InterPro" id="IPR018065">
    <property type="entry name" value="Ribosomal_eL34_CS"/>
</dbReference>
<dbReference type="InterPro" id="IPR047868">
    <property type="entry name" value="Ribosomal_L34e_arc-type"/>
</dbReference>
<dbReference type="NCBIfam" id="NF003143">
    <property type="entry name" value="PRK04059.1"/>
    <property type="match status" value="1"/>
</dbReference>
<dbReference type="Pfam" id="PF01199">
    <property type="entry name" value="Ribosomal_L34e"/>
    <property type="match status" value="1"/>
</dbReference>
<dbReference type="PRINTS" id="PR01250">
    <property type="entry name" value="RIBOSOMALL34"/>
</dbReference>
<dbReference type="PROSITE" id="PS01145">
    <property type="entry name" value="RIBOSOMAL_L34E"/>
    <property type="match status" value="1"/>
</dbReference>
<proteinExistence type="inferred from homology"/>
<evidence type="ECO:0000255" key="1">
    <source>
        <dbReference type="HAMAP-Rule" id="MF_00349"/>
    </source>
</evidence>
<evidence type="ECO:0000305" key="2"/>
<name>RL34_SACI1</name>
<reference key="1">
    <citation type="journal article" date="2009" name="Proc. Natl. Acad. Sci. U.S.A.">
        <title>Biogeography of the Sulfolobus islandicus pan-genome.</title>
        <authorList>
            <person name="Reno M.L."/>
            <person name="Held N.L."/>
            <person name="Fields C.J."/>
            <person name="Burke P.V."/>
            <person name="Whitaker R.J."/>
        </authorList>
    </citation>
    <scope>NUCLEOTIDE SEQUENCE [LARGE SCALE GENOMIC DNA]</scope>
    <source>
        <strain>Y.N.15.51 / Yellowstone #2</strain>
    </source>
</reference>
<accession>C3NH83</accession>
<comment type="similarity">
    <text evidence="1">Belongs to the eukaryotic ribosomal protein eL34 family.</text>
</comment>
<gene>
    <name evidence="1" type="primary">rpl34e</name>
    <name type="ordered locus">YN1551_1402</name>
</gene>
<protein>
    <recommendedName>
        <fullName evidence="1">Large ribosomal subunit protein eL34</fullName>
    </recommendedName>
    <alternativeName>
        <fullName evidence="2">50S ribosomal protein L34e</fullName>
    </alternativeName>
</protein>
<sequence length="85" mass="9804">MPRPALRSRSLRRIYVKLPSGKTAIHYERKKNDISKCAMCKKPLHGVKTNFLHKYGKSEKRPERPFGGYLCSSCLAQLIKAMVRQ</sequence>
<feature type="chain" id="PRO_1000205335" description="Large ribosomal subunit protein eL34">
    <location>
        <begin position="1"/>
        <end position="85"/>
    </location>
</feature>
<organism>
    <name type="scientific">Saccharolobus islandicus (strain Y.N.15.51 / Yellowstone #2)</name>
    <name type="common">Sulfolobus islandicus</name>
    <dbReference type="NCBI Taxonomy" id="419942"/>
    <lineage>
        <taxon>Archaea</taxon>
        <taxon>Thermoproteota</taxon>
        <taxon>Thermoprotei</taxon>
        <taxon>Sulfolobales</taxon>
        <taxon>Sulfolobaceae</taxon>
        <taxon>Saccharolobus</taxon>
    </lineage>
</organism>